<sequence>MTLPSGHPKSRLVKKFTALGPYIREGKCEDNRFFFDCLAVCVNVKPAPEVREFWGWWMELEAQESRFTYSYQFGLFDKAGDWTSVQIKDAEVVERLEHTLREFHEKLRELLATLNLKLEPADDFRDEPVKLTA</sequence>
<organism>
    <name type="scientific">Escherichia coli O45:K1 (strain S88 / ExPEC)</name>
    <dbReference type="NCBI Taxonomy" id="585035"/>
    <lineage>
        <taxon>Bacteria</taxon>
        <taxon>Pseudomonadati</taxon>
        <taxon>Pseudomonadota</taxon>
        <taxon>Gammaproteobacteria</taxon>
        <taxon>Enterobacterales</taxon>
        <taxon>Enterobacteriaceae</taxon>
        <taxon>Escherichia</taxon>
    </lineage>
</organism>
<feature type="chain" id="PRO_1000138134" description="Sigma factor-binding protein Crl">
    <location>
        <begin position="1"/>
        <end position="133"/>
    </location>
</feature>
<feature type="region of interest" description="Essential for activity" evidence="1">
    <location>
        <begin position="99"/>
        <end position="122"/>
    </location>
</feature>
<feature type="coiled-coil region" evidence="1">
    <location>
        <begin position="90"/>
        <end position="116"/>
    </location>
</feature>
<dbReference type="EMBL" id="CU928161">
    <property type="protein sequence ID" value="CAR01630.1"/>
    <property type="molecule type" value="Genomic_DNA"/>
</dbReference>
<dbReference type="RefSeq" id="WP_000174703.1">
    <property type="nucleotide sequence ID" value="NC_011742.1"/>
</dbReference>
<dbReference type="SMR" id="B7MC90"/>
<dbReference type="KEGG" id="ecz:ECS88_0275"/>
<dbReference type="HOGENOM" id="CLU_136773_0_0_6"/>
<dbReference type="Proteomes" id="UP000000747">
    <property type="component" value="Chromosome"/>
</dbReference>
<dbReference type="GO" id="GO:0005737">
    <property type="term" value="C:cytoplasm"/>
    <property type="evidence" value="ECO:0007669"/>
    <property type="project" value="UniProtKB-SubCell"/>
</dbReference>
<dbReference type="GO" id="GO:0045893">
    <property type="term" value="P:positive regulation of DNA-templated transcription"/>
    <property type="evidence" value="ECO:0007669"/>
    <property type="project" value="UniProtKB-UniRule"/>
</dbReference>
<dbReference type="FunFam" id="3.30.310.230:FF:000001">
    <property type="entry name" value="Sigma factor-binding protein Crl"/>
    <property type="match status" value="1"/>
</dbReference>
<dbReference type="Gene3D" id="3.30.310.230">
    <property type="entry name" value="Sigma factor-binding protein Crl monomer"/>
    <property type="match status" value="1"/>
</dbReference>
<dbReference type="HAMAP" id="MF_01178">
    <property type="entry name" value="Crl"/>
    <property type="match status" value="1"/>
</dbReference>
<dbReference type="InterPro" id="IPR009986">
    <property type="entry name" value="Tscrpt_reg_Crl"/>
</dbReference>
<dbReference type="InterPro" id="IPR038208">
    <property type="entry name" value="Tscrpt_reg_Crl_sf"/>
</dbReference>
<dbReference type="NCBIfam" id="NF008217">
    <property type="entry name" value="PRK10984.1"/>
    <property type="match status" value="1"/>
</dbReference>
<dbReference type="Pfam" id="PF07417">
    <property type="entry name" value="Crl"/>
    <property type="match status" value="1"/>
</dbReference>
<comment type="function">
    <text evidence="1">Binds to the sigma-S subunit of RNA polymerase, activating expression of sigma-S-regulated genes. Stimulates RNA polymerase holoenzyme formation and may bind to several other sigma factors, such as sigma-70 and sigma-32.</text>
</comment>
<comment type="subcellular location">
    <subcellularLocation>
        <location evidence="1">Cytoplasm</location>
    </subcellularLocation>
</comment>
<comment type="similarity">
    <text evidence="1">Belongs to the Crl family.</text>
</comment>
<name>CRL_ECO45</name>
<keyword id="KW-0010">Activator</keyword>
<keyword id="KW-0175">Coiled coil</keyword>
<keyword id="KW-0963">Cytoplasm</keyword>
<keyword id="KW-1185">Reference proteome</keyword>
<keyword id="KW-0804">Transcription</keyword>
<keyword id="KW-0805">Transcription regulation</keyword>
<accession>B7MC90</accession>
<proteinExistence type="inferred from homology"/>
<reference key="1">
    <citation type="journal article" date="2009" name="PLoS Genet.">
        <title>Organised genome dynamics in the Escherichia coli species results in highly diverse adaptive paths.</title>
        <authorList>
            <person name="Touchon M."/>
            <person name="Hoede C."/>
            <person name="Tenaillon O."/>
            <person name="Barbe V."/>
            <person name="Baeriswyl S."/>
            <person name="Bidet P."/>
            <person name="Bingen E."/>
            <person name="Bonacorsi S."/>
            <person name="Bouchier C."/>
            <person name="Bouvet O."/>
            <person name="Calteau A."/>
            <person name="Chiapello H."/>
            <person name="Clermont O."/>
            <person name="Cruveiller S."/>
            <person name="Danchin A."/>
            <person name="Diard M."/>
            <person name="Dossat C."/>
            <person name="Karoui M.E."/>
            <person name="Frapy E."/>
            <person name="Garry L."/>
            <person name="Ghigo J.M."/>
            <person name="Gilles A.M."/>
            <person name="Johnson J."/>
            <person name="Le Bouguenec C."/>
            <person name="Lescat M."/>
            <person name="Mangenot S."/>
            <person name="Martinez-Jehanne V."/>
            <person name="Matic I."/>
            <person name="Nassif X."/>
            <person name="Oztas S."/>
            <person name="Petit M.A."/>
            <person name="Pichon C."/>
            <person name="Rouy Z."/>
            <person name="Ruf C.S."/>
            <person name="Schneider D."/>
            <person name="Tourret J."/>
            <person name="Vacherie B."/>
            <person name="Vallenet D."/>
            <person name="Medigue C."/>
            <person name="Rocha E.P.C."/>
            <person name="Denamur E."/>
        </authorList>
    </citation>
    <scope>NUCLEOTIDE SEQUENCE [LARGE SCALE GENOMIC DNA]</scope>
    <source>
        <strain>S88 / ExPEC</strain>
    </source>
</reference>
<gene>
    <name evidence="1" type="primary">crl</name>
    <name type="ordered locus">ECS88_0275</name>
</gene>
<protein>
    <recommendedName>
        <fullName evidence="1">Sigma factor-binding protein Crl</fullName>
    </recommendedName>
</protein>
<evidence type="ECO:0000255" key="1">
    <source>
        <dbReference type="HAMAP-Rule" id="MF_01178"/>
    </source>
</evidence>